<protein>
    <recommendedName>
        <fullName evidence="1">Transcriptional repressor NrdR</fullName>
    </recommendedName>
</protein>
<reference key="1">
    <citation type="journal article" date="2008" name="J. Bacteriol.">
        <title>The pangenome structure of Escherichia coli: comparative genomic analysis of E. coli commensal and pathogenic isolates.</title>
        <authorList>
            <person name="Rasko D.A."/>
            <person name="Rosovitz M.J."/>
            <person name="Myers G.S.A."/>
            <person name="Mongodin E.F."/>
            <person name="Fricke W.F."/>
            <person name="Gajer P."/>
            <person name="Crabtree J."/>
            <person name="Sebaihia M."/>
            <person name="Thomson N.R."/>
            <person name="Chaudhuri R."/>
            <person name="Henderson I.R."/>
            <person name="Sperandio V."/>
            <person name="Ravel J."/>
        </authorList>
    </citation>
    <scope>NUCLEOTIDE SEQUENCE [LARGE SCALE GENOMIC DNA]</scope>
    <source>
        <strain>E24377A / ETEC</strain>
    </source>
</reference>
<proteinExistence type="inferred from homology"/>
<keyword id="KW-0067">ATP-binding</keyword>
<keyword id="KW-0238">DNA-binding</keyword>
<keyword id="KW-0479">Metal-binding</keyword>
<keyword id="KW-0547">Nucleotide-binding</keyword>
<keyword id="KW-1185">Reference proteome</keyword>
<keyword id="KW-0678">Repressor</keyword>
<keyword id="KW-0804">Transcription</keyword>
<keyword id="KW-0805">Transcription regulation</keyword>
<keyword id="KW-0862">Zinc</keyword>
<keyword id="KW-0863">Zinc-finger</keyword>
<dbReference type="EMBL" id="CP000800">
    <property type="protein sequence ID" value="ABV18820.1"/>
    <property type="molecule type" value="Genomic_DNA"/>
</dbReference>
<dbReference type="RefSeq" id="WP_000543535.1">
    <property type="nucleotide sequence ID" value="NC_009801.1"/>
</dbReference>
<dbReference type="SMR" id="A7ZIG6"/>
<dbReference type="GeneID" id="93777047"/>
<dbReference type="KEGG" id="ecw:EcE24377A_0444"/>
<dbReference type="HOGENOM" id="CLU_108412_0_0_6"/>
<dbReference type="Proteomes" id="UP000001122">
    <property type="component" value="Chromosome"/>
</dbReference>
<dbReference type="GO" id="GO:0005524">
    <property type="term" value="F:ATP binding"/>
    <property type="evidence" value="ECO:0007669"/>
    <property type="project" value="UniProtKB-KW"/>
</dbReference>
<dbReference type="GO" id="GO:0003677">
    <property type="term" value="F:DNA binding"/>
    <property type="evidence" value="ECO:0007669"/>
    <property type="project" value="UniProtKB-KW"/>
</dbReference>
<dbReference type="GO" id="GO:0008270">
    <property type="term" value="F:zinc ion binding"/>
    <property type="evidence" value="ECO:0007669"/>
    <property type="project" value="UniProtKB-UniRule"/>
</dbReference>
<dbReference type="GO" id="GO:0045892">
    <property type="term" value="P:negative regulation of DNA-templated transcription"/>
    <property type="evidence" value="ECO:0007669"/>
    <property type="project" value="UniProtKB-UniRule"/>
</dbReference>
<dbReference type="HAMAP" id="MF_00440">
    <property type="entry name" value="NrdR"/>
    <property type="match status" value="1"/>
</dbReference>
<dbReference type="InterPro" id="IPR005144">
    <property type="entry name" value="ATP-cone_dom"/>
</dbReference>
<dbReference type="InterPro" id="IPR055173">
    <property type="entry name" value="NrdR-like_N"/>
</dbReference>
<dbReference type="InterPro" id="IPR003796">
    <property type="entry name" value="RNR_NrdR-like"/>
</dbReference>
<dbReference type="NCBIfam" id="TIGR00244">
    <property type="entry name" value="transcriptional regulator NrdR"/>
    <property type="match status" value="1"/>
</dbReference>
<dbReference type="PANTHER" id="PTHR30455">
    <property type="entry name" value="TRANSCRIPTIONAL REPRESSOR NRDR"/>
    <property type="match status" value="1"/>
</dbReference>
<dbReference type="PANTHER" id="PTHR30455:SF2">
    <property type="entry name" value="TRANSCRIPTIONAL REPRESSOR NRDR"/>
    <property type="match status" value="1"/>
</dbReference>
<dbReference type="Pfam" id="PF03477">
    <property type="entry name" value="ATP-cone"/>
    <property type="match status" value="1"/>
</dbReference>
<dbReference type="Pfam" id="PF22811">
    <property type="entry name" value="Zn_ribbon_NrdR"/>
    <property type="match status" value="1"/>
</dbReference>
<dbReference type="PROSITE" id="PS51161">
    <property type="entry name" value="ATP_CONE"/>
    <property type="match status" value="1"/>
</dbReference>
<feature type="chain" id="PRO_1000080745" description="Transcriptional repressor NrdR">
    <location>
        <begin position="1"/>
        <end position="149"/>
    </location>
</feature>
<feature type="domain" description="ATP-cone" evidence="1">
    <location>
        <begin position="49"/>
        <end position="139"/>
    </location>
</feature>
<feature type="zinc finger region" evidence="1">
    <location>
        <begin position="3"/>
        <end position="34"/>
    </location>
</feature>
<accession>A7ZIG6</accession>
<gene>
    <name evidence="1" type="primary">nrdR</name>
    <name type="ordered locus">EcE24377A_0444</name>
</gene>
<name>NRDR_ECO24</name>
<sequence>MHCPFCFAVDTKVIDSRLVGEGSSVRRRRQCLVCNERFTTFEVAELVMPRVVKSNDVREPFNEEKLRSGMLRALEKRPVSSDDVEMAINHIKSQLRATGEREVPSKMIGNLVMEQLKKLDKVAYIRFASVYRSFEDIKEFGEEIARLED</sequence>
<organism>
    <name type="scientific">Escherichia coli O139:H28 (strain E24377A / ETEC)</name>
    <dbReference type="NCBI Taxonomy" id="331111"/>
    <lineage>
        <taxon>Bacteria</taxon>
        <taxon>Pseudomonadati</taxon>
        <taxon>Pseudomonadota</taxon>
        <taxon>Gammaproteobacteria</taxon>
        <taxon>Enterobacterales</taxon>
        <taxon>Enterobacteriaceae</taxon>
        <taxon>Escherichia</taxon>
    </lineage>
</organism>
<evidence type="ECO:0000255" key="1">
    <source>
        <dbReference type="HAMAP-Rule" id="MF_00440"/>
    </source>
</evidence>
<comment type="function">
    <text evidence="1">Negatively regulates transcription of bacterial ribonucleotide reductase nrd genes and operons by binding to NrdR-boxes.</text>
</comment>
<comment type="cofactor">
    <cofactor evidence="1">
        <name>Zn(2+)</name>
        <dbReference type="ChEBI" id="CHEBI:29105"/>
    </cofactor>
    <text evidence="1">Binds 1 zinc ion.</text>
</comment>
<comment type="similarity">
    <text evidence="1">Belongs to the NrdR family.</text>
</comment>